<sequence>MKQTVYTASPESQQIHVWSLNHEGTLTLVQVVDVPGQVQPMVVSPDKRYLYVGVRPEFRVLAYRIAPDDGVLTFAAESALPGSPTHISTDHHGRFVFVGSYNAGNVSVTRLQDGLPVELVDVVEGLDGCHSANITPDNRTLWVPALKQDRICLFTLSDDGHLVAQEPAEVNTVEGAGPRHMVFHPNRQYAYCVNELNSSVDVWQLKNPHGEIECVQTLDMMPADFSDTRWAADIHITPDGRHLYACDRTASLITVFSVSEDGSVLSVEGFQPTEVQPRGFNIDNSGKYLIAAGQKSHHIAVYEITGTQGLLTEKGRYAVGQGPMWVVVNAY</sequence>
<organism>
    <name type="scientific">Salmonella choleraesuis (strain SC-B67)</name>
    <dbReference type="NCBI Taxonomy" id="321314"/>
    <lineage>
        <taxon>Bacteria</taxon>
        <taxon>Pseudomonadati</taxon>
        <taxon>Pseudomonadota</taxon>
        <taxon>Gammaproteobacteria</taxon>
        <taxon>Enterobacterales</taxon>
        <taxon>Enterobacteriaceae</taxon>
        <taxon>Salmonella</taxon>
    </lineage>
</organism>
<evidence type="ECO:0000255" key="1">
    <source>
        <dbReference type="HAMAP-Rule" id="MF_01605"/>
    </source>
</evidence>
<accession>Q57RH2</accession>
<feature type="chain" id="PRO_0000291468" description="6-phosphogluconolactonase">
    <location>
        <begin position="1"/>
        <end position="331"/>
    </location>
</feature>
<comment type="function">
    <text evidence="1">Catalyzes the hydrolysis of 6-phosphogluconolactone to 6-phosphogluconate.</text>
</comment>
<comment type="catalytic activity">
    <reaction evidence="1">
        <text>6-phospho-D-glucono-1,5-lactone + H2O = 6-phospho-D-gluconate + H(+)</text>
        <dbReference type="Rhea" id="RHEA:12556"/>
        <dbReference type="ChEBI" id="CHEBI:15377"/>
        <dbReference type="ChEBI" id="CHEBI:15378"/>
        <dbReference type="ChEBI" id="CHEBI:57955"/>
        <dbReference type="ChEBI" id="CHEBI:58759"/>
        <dbReference type="EC" id="3.1.1.31"/>
    </reaction>
</comment>
<comment type="pathway">
    <text evidence="1">Carbohydrate degradation; pentose phosphate pathway; D-ribulose 5-phosphate from D-glucose 6-phosphate (oxidative stage): step 2/3.</text>
</comment>
<comment type="similarity">
    <text evidence="1">Belongs to the cycloisomerase 2 family.</text>
</comment>
<proteinExistence type="inferred from homology"/>
<dbReference type="EC" id="3.1.1.31" evidence="1"/>
<dbReference type="EMBL" id="AE017220">
    <property type="protein sequence ID" value="AAX64689.1"/>
    <property type="molecule type" value="Genomic_DNA"/>
</dbReference>
<dbReference type="RefSeq" id="WP_000815475.1">
    <property type="nucleotide sequence ID" value="NC_006905.1"/>
</dbReference>
<dbReference type="SMR" id="Q57RH2"/>
<dbReference type="KEGG" id="sec:SCH_0783"/>
<dbReference type="HOGENOM" id="CLU_038716_2_0_6"/>
<dbReference type="UniPathway" id="UPA00115">
    <property type="reaction ID" value="UER00409"/>
</dbReference>
<dbReference type="Proteomes" id="UP000000538">
    <property type="component" value="Chromosome"/>
</dbReference>
<dbReference type="GO" id="GO:0005829">
    <property type="term" value="C:cytosol"/>
    <property type="evidence" value="ECO:0007669"/>
    <property type="project" value="TreeGrafter"/>
</dbReference>
<dbReference type="GO" id="GO:0017057">
    <property type="term" value="F:6-phosphogluconolactonase activity"/>
    <property type="evidence" value="ECO:0007669"/>
    <property type="project" value="UniProtKB-UniRule"/>
</dbReference>
<dbReference type="GO" id="GO:0006006">
    <property type="term" value="P:glucose metabolic process"/>
    <property type="evidence" value="ECO:0007669"/>
    <property type="project" value="UniProtKB-KW"/>
</dbReference>
<dbReference type="GO" id="GO:0009051">
    <property type="term" value="P:pentose-phosphate shunt, oxidative branch"/>
    <property type="evidence" value="ECO:0007669"/>
    <property type="project" value="UniProtKB-UniRule"/>
</dbReference>
<dbReference type="FunFam" id="2.130.10.10:FF:000051">
    <property type="entry name" value="6-phosphogluconolactonase"/>
    <property type="match status" value="1"/>
</dbReference>
<dbReference type="Gene3D" id="2.130.10.10">
    <property type="entry name" value="YVTN repeat-like/Quinoprotein amine dehydrogenase"/>
    <property type="match status" value="1"/>
</dbReference>
<dbReference type="HAMAP" id="MF_01605">
    <property type="entry name" value="6P_gluconolactonase"/>
    <property type="match status" value="1"/>
</dbReference>
<dbReference type="InterPro" id="IPR022528">
    <property type="entry name" value="6-phosphogluconolactonase_YbhE"/>
</dbReference>
<dbReference type="InterPro" id="IPR050282">
    <property type="entry name" value="Cycloisomerase_2"/>
</dbReference>
<dbReference type="InterPro" id="IPR019405">
    <property type="entry name" value="Lactonase_7-beta_prop"/>
</dbReference>
<dbReference type="InterPro" id="IPR011045">
    <property type="entry name" value="N2O_reductase_N"/>
</dbReference>
<dbReference type="InterPro" id="IPR015943">
    <property type="entry name" value="WD40/YVTN_repeat-like_dom_sf"/>
</dbReference>
<dbReference type="NCBIfam" id="NF008258">
    <property type="entry name" value="PRK11028.1"/>
    <property type="match status" value="1"/>
</dbReference>
<dbReference type="PANTHER" id="PTHR30344:SF1">
    <property type="entry name" value="6-PHOSPHOGLUCONOLACTONASE"/>
    <property type="match status" value="1"/>
</dbReference>
<dbReference type="PANTHER" id="PTHR30344">
    <property type="entry name" value="6-PHOSPHOGLUCONOLACTONASE-RELATED"/>
    <property type="match status" value="1"/>
</dbReference>
<dbReference type="Pfam" id="PF10282">
    <property type="entry name" value="Lactonase"/>
    <property type="match status" value="1"/>
</dbReference>
<dbReference type="SUPFAM" id="SSF50974">
    <property type="entry name" value="Nitrous oxide reductase, N-terminal domain"/>
    <property type="match status" value="2"/>
</dbReference>
<protein>
    <recommendedName>
        <fullName evidence="1">6-phosphogluconolactonase</fullName>
        <shortName evidence="1">6-P-gluconolactonase</shortName>
        <ecNumber evidence="1">3.1.1.31</ecNumber>
    </recommendedName>
</protein>
<keyword id="KW-0119">Carbohydrate metabolism</keyword>
<keyword id="KW-0313">Glucose metabolism</keyword>
<keyword id="KW-0378">Hydrolase</keyword>
<reference key="1">
    <citation type="journal article" date="2005" name="Nucleic Acids Res.">
        <title>The genome sequence of Salmonella enterica serovar Choleraesuis, a highly invasive and resistant zoonotic pathogen.</title>
        <authorList>
            <person name="Chiu C.-H."/>
            <person name="Tang P."/>
            <person name="Chu C."/>
            <person name="Hu S."/>
            <person name="Bao Q."/>
            <person name="Yu J."/>
            <person name="Chou Y.-Y."/>
            <person name="Wang H.-S."/>
            <person name="Lee Y.-S."/>
        </authorList>
    </citation>
    <scope>NUCLEOTIDE SEQUENCE [LARGE SCALE GENOMIC DNA]</scope>
    <source>
        <strain>SC-B67</strain>
    </source>
</reference>
<gene>
    <name evidence="1" type="primary">pgl</name>
    <name type="ordered locus">SCH_0783</name>
</gene>
<name>6PGL_SALCH</name>